<dbReference type="EC" id="3.1.26.4" evidence="1"/>
<dbReference type="EMBL" id="CP000764">
    <property type="protein sequence ID" value="ABS22725.1"/>
    <property type="molecule type" value="Genomic_DNA"/>
</dbReference>
<dbReference type="RefSeq" id="WP_012094930.1">
    <property type="nucleotide sequence ID" value="NC_009674.1"/>
</dbReference>
<dbReference type="SMR" id="A7GRG7"/>
<dbReference type="STRING" id="315749.Bcer98_2489"/>
<dbReference type="GeneID" id="33897744"/>
<dbReference type="KEGG" id="bcy:Bcer98_2489"/>
<dbReference type="eggNOG" id="COG0164">
    <property type="taxonomic scope" value="Bacteria"/>
</dbReference>
<dbReference type="HOGENOM" id="CLU_036532_2_1_9"/>
<dbReference type="OrthoDB" id="9803420at2"/>
<dbReference type="Proteomes" id="UP000002300">
    <property type="component" value="Chromosome"/>
</dbReference>
<dbReference type="GO" id="GO:0005737">
    <property type="term" value="C:cytoplasm"/>
    <property type="evidence" value="ECO:0007669"/>
    <property type="project" value="UniProtKB-SubCell"/>
</dbReference>
<dbReference type="GO" id="GO:0032299">
    <property type="term" value="C:ribonuclease H2 complex"/>
    <property type="evidence" value="ECO:0007669"/>
    <property type="project" value="TreeGrafter"/>
</dbReference>
<dbReference type="GO" id="GO:0030145">
    <property type="term" value="F:manganese ion binding"/>
    <property type="evidence" value="ECO:0007669"/>
    <property type="project" value="UniProtKB-UniRule"/>
</dbReference>
<dbReference type="GO" id="GO:0003723">
    <property type="term" value="F:RNA binding"/>
    <property type="evidence" value="ECO:0007669"/>
    <property type="project" value="InterPro"/>
</dbReference>
<dbReference type="GO" id="GO:0004523">
    <property type="term" value="F:RNA-DNA hybrid ribonuclease activity"/>
    <property type="evidence" value="ECO:0007669"/>
    <property type="project" value="UniProtKB-UniRule"/>
</dbReference>
<dbReference type="GO" id="GO:0043137">
    <property type="term" value="P:DNA replication, removal of RNA primer"/>
    <property type="evidence" value="ECO:0007669"/>
    <property type="project" value="TreeGrafter"/>
</dbReference>
<dbReference type="GO" id="GO:0006298">
    <property type="term" value="P:mismatch repair"/>
    <property type="evidence" value="ECO:0007669"/>
    <property type="project" value="TreeGrafter"/>
</dbReference>
<dbReference type="CDD" id="cd07182">
    <property type="entry name" value="RNase_HII_bacteria_HII_like"/>
    <property type="match status" value="1"/>
</dbReference>
<dbReference type="FunFam" id="3.30.420.10:FF:000006">
    <property type="entry name" value="Ribonuclease HII"/>
    <property type="match status" value="1"/>
</dbReference>
<dbReference type="Gene3D" id="3.30.420.10">
    <property type="entry name" value="Ribonuclease H-like superfamily/Ribonuclease H"/>
    <property type="match status" value="1"/>
</dbReference>
<dbReference type="HAMAP" id="MF_00052_B">
    <property type="entry name" value="RNase_HII_B"/>
    <property type="match status" value="1"/>
</dbReference>
<dbReference type="InterPro" id="IPR022898">
    <property type="entry name" value="RNase_HII"/>
</dbReference>
<dbReference type="InterPro" id="IPR001352">
    <property type="entry name" value="RNase_HII/HIII"/>
</dbReference>
<dbReference type="InterPro" id="IPR024567">
    <property type="entry name" value="RNase_HII/HIII_dom"/>
</dbReference>
<dbReference type="InterPro" id="IPR012337">
    <property type="entry name" value="RNaseH-like_sf"/>
</dbReference>
<dbReference type="InterPro" id="IPR036397">
    <property type="entry name" value="RNaseH_sf"/>
</dbReference>
<dbReference type="NCBIfam" id="NF000594">
    <property type="entry name" value="PRK00015.1-1"/>
    <property type="match status" value="1"/>
</dbReference>
<dbReference type="NCBIfam" id="NF000595">
    <property type="entry name" value="PRK00015.1-3"/>
    <property type="match status" value="1"/>
</dbReference>
<dbReference type="PANTHER" id="PTHR10954">
    <property type="entry name" value="RIBONUCLEASE H2 SUBUNIT A"/>
    <property type="match status" value="1"/>
</dbReference>
<dbReference type="PANTHER" id="PTHR10954:SF18">
    <property type="entry name" value="RIBONUCLEASE HII"/>
    <property type="match status" value="1"/>
</dbReference>
<dbReference type="Pfam" id="PF01351">
    <property type="entry name" value="RNase_HII"/>
    <property type="match status" value="1"/>
</dbReference>
<dbReference type="SUPFAM" id="SSF53098">
    <property type="entry name" value="Ribonuclease H-like"/>
    <property type="match status" value="1"/>
</dbReference>
<dbReference type="PROSITE" id="PS51975">
    <property type="entry name" value="RNASE_H_2"/>
    <property type="match status" value="1"/>
</dbReference>
<accession>A7GRG7</accession>
<organism>
    <name type="scientific">Bacillus cytotoxicus (strain DSM 22905 / CIP 110041 / 391-98 / NVH 391-98)</name>
    <dbReference type="NCBI Taxonomy" id="315749"/>
    <lineage>
        <taxon>Bacteria</taxon>
        <taxon>Bacillati</taxon>
        <taxon>Bacillota</taxon>
        <taxon>Bacilli</taxon>
        <taxon>Bacillales</taxon>
        <taxon>Bacillaceae</taxon>
        <taxon>Bacillus</taxon>
        <taxon>Bacillus cereus group</taxon>
    </lineage>
</organism>
<name>RNH2_BACCN</name>
<gene>
    <name evidence="1" type="primary">rnhB</name>
    <name type="ordered locus">Bcer98_2489</name>
</gene>
<proteinExistence type="inferred from homology"/>
<evidence type="ECO:0000255" key="1">
    <source>
        <dbReference type="HAMAP-Rule" id="MF_00052"/>
    </source>
</evidence>
<evidence type="ECO:0000255" key="2">
    <source>
        <dbReference type="PROSITE-ProRule" id="PRU01319"/>
    </source>
</evidence>
<sequence>MGKWTIKEASELLQEIGTEEDERFQILLKDERKGIQNLISKWRKQKKKMQEEKEQFLEMSKYENALRKQGISYIAGIDEVGRGPLAGPVVTAAVILPEEFYIPGLNDSKKLSEAKRELFYDEIREKAIAIGVGIVSPQVIDEMNIYQATKRAMLDAVANLSYAPEHLLIDAMKLPTSIPQTSIVKGDAKSISISAASIIAKVTRDRMMKELGKTYPEYGFEKHMGYGTKQHLEAIETYGVLEEHRKTFAPIKDMIKNKL</sequence>
<comment type="function">
    <text evidence="1">Endonuclease that specifically degrades the RNA of RNA-DNA hybrids.</text>
</comment>
<comment type="catalytic activity">
    <reaction evidence="1">
        <text>Endonucleolytic cleavage to 5'-phosphomonoester.</text>
        <dbReference type="EC" id="3.1.26.4"/>
    </reaction>
</comment>
<comment type="cofactor">
    <cofactor evidence="1">
        <name>Mn(2+)</name>
        <dbReference type="ChEBI" id="CHEBI:29035"/>
    </cofactor>
    <cofactor evidence="1">
        <name>Mg(2+)</name>
        <dbReference type="ChEBI" id="CHEBI:18420"/>
    </cofactor>
    <text evidence="1">Manganese or magnesium. Binds 1 divalent metal ion per monomer in the absence of substrate. May bind a second metal ion after substrate binding.</text>
</comment>
<comment type="subcellular location">
    <subcellularLocation>
        <location evidence="1">Cytoplasm</location>
    </subcellularLocation>
</comment>
<comment type="similarity">
    <text evidence="1">Belongs to the RNase HII family.</text>
</comment>
<feature type="chain" id="PRO_1000074916" description="Ribonuclease HII">
    <location>
        <begin position="1"/>
        <end position="259"/>
    </location>
</feature>
<feature type="domain" description="RNase H type-2" evidence="2">
    <location>
        <begin position="72"/>
        <end position="259"/>
    </location>
</feature>
<feature type="binding site" evidence="1">
    <location>
        <position position="78"/>
    </location>
    <ligand>
        <name>a divalent metal cation</name>
        <dbReference type="ChEBI" id="CHEBI:60240"/>
    </ligand>
</feature>
<feature type="binding site" evidence="1">
    <location>
        <position position="79"/>
    </location>
    <ligand>
        <name>a divalent metal cation</name>
        <dbReference type="ChEBI" id="CHEBI:60240"/>
    </ligand>
</feature>
<feature type="binding site" evidence="1">
    <location>
        <position position="170"/>
    </location>
    <ligand>
        <name>a divalent metal cation</name>
        <dbReference type="ChEBI" id="CHEBI:60240"/>
    </ligand>
</feature>
<reference key="1">
    <citation type="journal article" date="2008" name="Chem. Biol. Interact.">
        <title>Extending the Bacillus cereus group genomics to putative food-borne pathogens of different toxicity.</title>
        <authorList>
            <person name="Lapidus A."/>
            <person name="Goltsman E."/>
            <person name="Auger S."/>
            <person name="Galleron N."/>
            <person name="Segurens B."/>
            <person name="Dossat C."/>
            <person name="Land M.L."/>
            <person name="Broussolle V."/>
            <person name="Brillard J."/>
            <person name="Guinebretiere M.-H."/>
            <person name="Sanchis V."/>
            <person name="Nguen-the C."/>
            <person name="Lereclus D."/>
            <person name="Richardson P."/>
            <person name="Wincker P."/>
            <person name="Weissenbach J."/>
            <person name="Ehrlich S.D."/>
            <person name="Sorokin A."/>
        </authorList>
    </citation>
    <scope>NUCLEOTIDE SEQUENCE [LARGE SCALE GENOMIC DNA]</scope>
    <source>
        <strain>DSM 22905 / CIP 110041 / 391-98 / NVH 391-98</strain>
    </source>
</reference>
<keyword id="KW-0963">Cytoplasm</keyword>
<keyword id="KW-0255">Endonuclease</keyword>
<keyword id="KW-0378">Hydrolase</keyword>
<keyword id="KW-0464">Manganese</keyword>
<keyword id="KW-0479">Metal-binding</keyword>
<keyword id="KW-0540">Nuclease</keyword>
<protein>
    <recommendedName>
        <fullName evidence="1">Ribonuclease HII</fullName>
        <shortName evidence="1">RNase HII</shortName>
        <ecNumber evidence="1">3.1.26.4</ecNumber>
    </recommendedName>
</protein>